<name>CN023_HUMAN</name>
<protein>
    <recommendedName>
        <fullName evidence="2">Uncharacterized protein encoded by LINC01551</fullName>
    </recommendedName>
</protein>
<organism>
    <name type="scientific">Homo sapiens</name>
    <name type="common">Human</name>
    <dbReference type="NCBI Taxonomy" id="9606"/>
    <lineage>
        <taxon>Eukaryota</taxon>
        <taxon>Metazoa</taxon>
        <taxon>Chordata</taxon>
        <taxon>Craniata</taxon>
        <taxon>Vertebrata</taxon>
        <taxon>Euteleostomi</taxon>
        <taxon>Mammalia</taxon>
        <taxon>Eutheria</taxon>
        <taxon>Euarchontoglires</taxon>
        <taxon>Primates</taxon>
        <taxon>Haplorrhini</taxon>
        <taxon>Catarrhini</taxon>
        <taxon>Hominidae</taxon>
        <taxon>Homo</taxon>
    </lineage>
</organism>
<evidence type="ECO:0000305" key="1"/>
<evidence type="ECO:0000312" key="2">
    <source>
        <dbReference type="HGNC" id="HGNC:19828"/>
    </source>
</evidence>
<reference key="1">
    <citation type="submission" date="2003-02" db="EMBL/GenBank/DDBJ databases">
        <title>Full-length cDNA libraries and normalization.</title>
        <authorList>
            <person name="Li W.B."/>
            <person name="Gruber C."/>
            <person name="Jessee J."/>
            <person name="Polayes D."/>
        </authorList>
    </citation>
    <scope>NUCLEOTIDE SEQUENCE [LARGE SCALE MRNA]</scope>
    <source>
        <tissue>Fetal brain</tissue>
    </source>
</reference>
<reference key="2">
    <citation type="journal article" date="2003" name="Nature">
        <title>The DNA sequence and analysis of human chromosome 14.</title>
        <authorList>
            <person name="Heilig R."/>
            <person name="Eckenberg R."/>
            <person name="Petit J.-L."/>
            <person name="Fonknechten N."/>
            <person name="Da Silva C."/>
            <person name="Cattolico L."/>
            <person name="Levy M."/>
            <person name="Barbe V."/>
            <person name="De Berardinis V."/>
            <person name="Ureta-Vidal A."/>
            <person name="Pelletier E."/>
            <person name="Vico V."/>
            <person name="Anthouard V."/>
            <person name="Rowen L."/>
            <person name="Madan A."/>
            <person name="Qin S."/>
            <person name="Sun H."/>
            <person name="Du H."/>
            <person name="Pepin K."/>
            <person name="Artiguenave F."/>
            <person name="Robert C."/>
            <person name="Cruaud C."/>
            <person name="Bruels T."/>
            <person name="Jaillon O."/>
            <person name="Friedlander L."/>
            <person name="Samson G."/>
            <person name="Brottier P."/>
            <person name="Cure S."/>
            <person name="Segurens B."/>
            <person name="Aniere F."/>
            <person name="Samain S."/>
            <person name="Crespeau H."/>
            <person name="Abbasi N."/>
            <person name="Aiach N."/>
            <person name="Boscus D."/>
            <person name="Dickhoff R."/>
            <person name="Dors M."/>
            <person name="Dubois I."/>
            <person name="Friedman C."/>
            <person name="Gouyvenoux M."/>
            <person name="James R."/>
            <person name="Madan A."/>
            <person name="Mairey-Estrada B."/>
            <person name="Mangenot S."/>
            <person name="Martins N."/>
            <person name="Menard M."/>
            <person name="Oztas S."/>
            <person name="Ratcliffe A."/>
            <person name="Shaffer T."/>
            <person name="Trask B."/>
            <person name="Vacherie B."/>
            <person name="Bellemere C."/>
            <person name="Belser C."/>
            <person name="Besnard-Gonnet M."/>
            <person name="Bartol-Mavel D."/>
            <person name="Boutard M."/>
            <person name="Briez-Silla S."/>
            <person name="Combette S."/>
            <person name="Dufosse-Laurent V."/>
            <person name="Ferron C."/>
            <person name="Lechaplais C."/>
            <person name="Louesse C."/>
            <person name="Muselet D."/>
            <person name="Magdelenat G."/>
            <person name="Pateau E."/>
            <person name="Petit E."/>
            <person name="Sirvain-Trukniewicz P."/>
            <person name="Trybou A."/>
            <person name="Vega-Czarny N."/>
            <person name="Bataille E."/>
            <person name="Bluet E."/>
            <person name="Bordelais I."/>
            <person name="Dubois M."/>
            <person name="Dumont C."/>
            <person name="Guerin T."/>
            <person name="Haffray S."/>
            <person name="Hammadi R."/>
            <person name="Muanga J."/>
            <person name="Pellouin V."/>
            <person name="Robert D."/>
            <person name="Wunderle E."/>
            <person name="Gauguet G."/>
            <person name="Roy A."/>
            <person name="Sainte-Marthe L."/>
            <person name="Verdier J."/>
            <person name="Verdier-Discala C."/>
            <person name="Hillier L.W."/>
            <person name="Fulton L."/>
            <person name="McPherson J."/>
            <person name="Matsuda F."/>
            <person name="Wilson R."/>
            <person name="Scarpelli C."/>
            <person name="Gyapay G."/>
            <person name="Wincker P."/>
            <person name="Saurin W."/>
            <person name="Quetier F."/>
            <person name="Waterston R."/>
            <person name="Hood L."/>
            <person name="Weissenbach J."/>
        </authorList>
    </citation>
    <scope>NUCLEOTIDE SEQUENCE [LARGE SCALE GENOMIC DNA]</scope>
</reference>
<dbReference type="EMBL" id="BX248251">
    <property type="protein sequence ID" value="CAD62579.1"/>
    <property type="status" value="ALT_INIT"/>
    <property type="molecule type" value="mRNA"/>
</dbReference>
<dbReference type="EMBL" id="AL049777">
    <property type="status" value="NOT_ANNOTATED_CDS"/>
    <property type="molecule type" value="Genomic_DNA"/>
</dbReference>
<dbReference type="SMR" id="Q86U37"/>
<dbReference type="GlyGen" id="Q86U37">
    <property type="glycosylation" value="2 sites, 1 O-linked glycan (2 sites)"/>
</dbReference>
<dbReference type="iPTMnet" id="Q86U37"/>
<dbReference type="PhosphoSitePlus" id="Q86U37"/>
<dbReference type="BioMuta" id="HGNC:19828"/>
<dbReference type="PeptideAtlas" id="Q86U37"/>
<dbReference type="ProteomicsDB" id="69764"/>
<dbReference type="AGR" id="HGNC:19828"/>
<dbReference type="GeneCards" id="LINC01551"/>
<dbReference type="HGNC" id="HGNC:19828">
    <property type="gene designation" value="LINC01551"/>
</dbReference>
<dbReference type="neXtProt" id="NX_Q86U37"/>
<dbReference type="InParanoid" id="Q86U37"/>
<dbReference type="PAN-GO" id="Q86U37">
    <property type="GO annotations" value="0 GO annotations based on evolutionary models"/>
</dbReference>
<dbReference type="PhylomeDB" id="Q86U37"/>
<dbReference type="TreeFam" id="TF342225"/>
<dbReference type="PathwayCommons" id="Q86U37"/>
<dbReference type="ChiTaRS" id="LINC01551">
    <property type="organism name" value="human"/>
</dbReference>
<dbReference type="Pharos" id="Q86U37">
    <property type="development level" value="Tdark"/>
</dbReference>
<dbReference type="PRO" id="PR:Q86U37"/>
<dbReference type="Proteomes" id="UP000005640">
    <property type="component" value="Unplaced"/>
</dbReference>
<dbReference type="RNAct" id="Q86U37">
    <property type="molecule type" value="protein"/>
</dbReference>
<feature type="chain" id="PRO_0000340719" description="Uncharacterized protein encoded by LINC01551">
    <location>
        <begin position="1"/>
        <end position="167"/>
    </location>
</feature>
<proteinExistence type="evidence at transcript level"/>
<gene>
    <name evidence="2" type="primary">LINC01551</name>
    <name evidence="2" type="synonym">C14orf23</name>
</gene>
<comment type="sequence caution" evidence="1">
    <conflict type="erroneous initiation">
        <sequence resource="EMBL-CDS" id="CAD62579"/>
    </conflict>
</comment>
<keyword id="KW-1185">Reference proteome</keyword>
<sequence>MELSSMKICAAIPTSRALPEVVRRMPRKRISGLEWLLQQDPGFSLVNTVKAGMIISFPSNNIYSSVCCCQSEIFKYEFSNSKKSSWIQEERHLGKNNVLYSAHDVSPEKVTSALKKTNKQTTTINNFPLQYLPGSKLLDRFLSLSRSLLCLNSWSSSLPLAPQVKKK</sequence>
<accession>Q86U37</accession>
<accession>A8MT64</accession>